<accession>A5V9F7</accession>
<feature type="chain" id="PRO_0000319665" description="Phosphoribosyl-ATP pyrophosphatase">
    <location>
        <begin position="1"/>
        <end position="106"/>
    </location>
</feature>
<protein>
    <recommendedName>
        <fullName evidence="1">Phosphoribosyl-ATP pyrophosphatase</fullName>
        <shortName evidence="1">PRA-PH</shortName>
        <ecNumber evidence="1">3.6.1.31</ecNumber>
    </recommendedName>
</protein>
<gene>
    <name evidence="1" type="primary">hisE</name>
    <name type="ordered locus">Swit_2565</name>
</gene>
<proteinExistence type="inferred from homology"/>
<keyword id="KW-0028">Amino-acid biosynthesis</keyword>
<keyword id="KW-0067">ATP-binding</keyword>
<keyword id="KW-0963">Cytoplasm</keyword>
<keyword id="KW-0368">Histidine biosynthesis</keyword>
<keyword id="KW-0378">Hydrolase</keyword>
<keyword id="KW-0547">Nucleotide-binding</keyword>
<keyword id="KW-1185">Reference proteome</keyword>
<organism>
    <name type="scientific">Rhizorhabdus wittichii (strain DSM 6014 / CCUG 31198 / JCM 15750 / NBRC 105917 / EY 4224 / RW1)</name>
    <name type="common">Sphingomonas wittichii</name>
    <dbReference type="NCBI Taxonomy" id="392499"/>
    <lineage>
        <taxon>Bacteria</taxon>
        <taxon>Pseudomonadati</taxon>
        <taxon>Pseudomonadota</taxon>
        <taxon>Alphaproteobacteria</taxon>
        <taxon>Sphingomonadales</taxon>
        <taxon>Sphingomonadaceae</taxon>
        <taxon>Rhizorhabdus</taxon>
    </lineage>
</organism>
<sequence length="106" mass="11027">MTGTLDQLESTIAARRAADPSTSYVAALFAKGMPKIAQKLGEEAVETVIAAMAGDRRGVTGEAADLLFHLMVLLAEAGVPFADVLAELDRREGTSGLAEKAARPKG</sequence>
<evidence type="ECO:0000255" key="1">
    <source>
        <dbReference type="HAMAP-Rule" id="MF_01020"/>
    </source>
</evidence>
<dbReference type="EC" id="3.6.1.31" evidence="1"/>
<dbReference type="EMBL" id="CP000699">
    <property type="protein sequence ID" value="ABQ68923.1"/>
    <property type="molecule type" value="Genomic_DNA"/>
</dbReference>
<dbReference type="SMR" id="A5V9F7"/>
<dbReference type="STRING" id="392499.Swit_2565"/>
<dbReference type="PaxDb" id="392499-Swit_2565"/>
<dbReference type="KEGG" id="swi:Swit_2565"/>
<dbReference type="eggNOG" id="COG0140">
    <property type="taxonomic scope" value="Bacteria"/>
</dbReference>
<dbReference type="HOGENOM" id="CLU_123337_1_2_5"/>
<dbReference type="OrthoDB" id="9814738at2"/>
<dbReference type="UniPathway" id="UPA00031">
    <property type="reaction ID" value="UER00007"/>
</dbReference>
<dbReference type="Proteomes" id="UP000001989">
    <property type="component" value="Chromosome"/>
</dbReference>
<dbReference type="GO" id="GO:0005737">
    <property type="term" value="C:cytoplasm"/>
    <property type="evidence" value="ECO:0007669"/>
    <property type="project" value="UniProtKB-SubCell"/>
</dbReference>
<dbReference type="GO" id="GO:0005524">
    <property type="term" value="F:ATP binding"/>
    <property type="evidence" value="ECO:0007669"/>
    <property type="project" value="UniProtKB-KW"/>
</dbReference>
<dbReference type="GO" id="GO:0004636">
    <property type="term" value="F:phosphoribosyl-ATP diphosphatase activity"/>
    <property type="evidence" value="ECO:0007669"/>
    <property type="project" value="UniProtKB-UniRule"/>
</dbReference>
<dbReference type="GO" id="GO:0000105">
    <property type="term" value="P:L-histidine biosynthetic process"/>
    <property type="evidence" value="ECO:0007669"/>
    <property type="project" value="UniProtKB-UniRule"/>
</dbReference>
<dbReference type="CDD" id="cd11534">
    <property type="entry name" value="NTP-PPase_HisIE_like"/>
    <property type="match status" value="1"/>
</dbReference>
<dbReference type="FunFam" id="1.10.287.1080:FF:000002">
    <property type="entry name" value="Histidine biosynthesis bifunctional protein HisIE"/>
    <property type="match status" value="1"/>
</dbReference>
<dbReference type="Gene3D" id="1.10.287.1080">
    <property type="entry name" value="MazG-like"/>
    <property type="match status" value="1"/>
</dbReference>
<dbReference type="HAMAP" id="MF_01020">
    <property type="entry name" value="HisE"/>
    <property type="match status" value="1"/>
</dbReference>
<dbReference type="InterPro" id="IPR008179">
    <property type="entry name" value="HisE"/>
</dbReference>
<dbReference type="InterPro" id="IPR021130">
    <property type="entry name" value="PRib-ATP_PPHydrolase-like"/>
</dbReference>
<dbReference type="NCBIfam" id="TIGR03188">
    <property type="entry name" value="histidine_hisI"/>
    <property type="match status" value="1"/>
</dbReference>
<dbReference type="NCBIfam" id="NF001611">
    <property type="entry name" value="PRK00400.1-3"/>
    <property type="match status" value="1"/>
</dbReference>
<dbReference type="NCBIfam" id="NF001613">
    <property type="entry name" value="PRK00400.1-5"/>
    <property type="match status" value="1"/>
</dbReference>
<dbReference type="PANTHER" id="PTHR42945">
    <property type="entry name" value="HISTIDINE BIOSYNTHESIS BIFUNCTIONAL PROTEIN"/>
    <property type="match status" value="1"/>
</dbReference>
<dbReference type="PANTHER" id="PTHR42945:SF9">
    <property type="entry name" value="HISTIDINE BIOSYNTHESIS BIFUNCTIONAL PROTEIN HISIE"/>
    <property type="match status" value="1"/>
</dbReference>
<dbReference type="Pfam" id="PF01503">
    <property type="entry name" value="PRA-PH"/>
    <property type="match status" value="1"/>
</dbReference>
<dbReference type="SUPFAM" id="SSF101386">
    <property type="entry name" value="all-alpha NTP pyrophosphatases"/>
    <property type="match status" value="1"/>
</dbReference>
<reference key="1">
    <citation type="journal article" date="2010" name="J. Bacteriol.">
        <title>Genome sequence of the dioxin-mineralizing bacterium Sphingomonas wittichii RW1.</title>
        <authorList>
            <person name="Miller T.R."/>
            <person name="Delcher A.L."/>
            <person name="Salzberg S.L."/>
            <person name="Saunders E."/>
            <person name="Detter J.C."/>
            <person name="Halden R.U."/>
        </authorList>
    </citation>
    <scope>NUCLEOTIDE SEQUENCE [LARGE SCALE GENOMIC DNA]</scope>
    <source>
        <strain>DSM 6014 / CCUG 31198 / JCM 15750 / NBRC 105917 / EY 4224 / RW1</strain>
    </source>
</reference>
<name>HIS2_RHIWR</name>
<comment type="catalytic activity">
    <reaction evidence="1">
        <text>1-(5-phospho-beta-D-ribosyl)-ATP + H2O = 1-(5-phospho-beta-D-ribosyl)-5'-AMP + diphosphate + H(+)</text>
        <dbReference type="Rhea" id="RHEA:22828"/>
        <dbReference type="ChEBI" id="CHEBI:15377"/>
        <dbReference type="ChEBI" id="CHEBI:15378"/>
        <dbReference type="ChEBI" id="CHEBI:33019"/>
        <dbReference type="ChEBI" id="CHEBI:59457"/>
        <dbReference type="ChEBI" id="CHEBI:73183"/>
        <dbReference type="EC" id="3.6.1.31"/>
    </reaction>
</comment>
<comment type="pathway">
    <text evidence="1">Amino-acid biosynthesis; L-histidine biosynthesis; L-histidine from 5-phospho-alpha-D-ribose 1-diphosphate: step 2/9.</text>
</comment>
<comment type="subcellular location">
    <subcellularLocation>
        <location evidence="1">Cytoplasm</location>
    </subcellularLocation>
</comment>
<comment type="similarity">
    <text evidence="1">Belongs to the PRA-PH family.</text>
</comment>